<accession>Q73F72</accession>
<comment type="similarity">
    <text evidence="1">Belongs to the bacterial ribosomal protein bL36 family.</text>
</comment>
<protein>
    <recommendedName>
        <fullName evidence="1">Large ribosomal subunit protein bL36</fullName>
    </recommendedName>
    <alternativeName>
        <fullName evidence="2">50S ribosomal protein L36</fullName>
    </alternativeName>
</protein>
<sequence>MKVRPSVKPICEKCKVIRRRGKVMVICENPKHKQKQG</sequence>
<reference key="1">
    <citation type="journal article" date="2004" name="Nucleic Acids Res.">
        <title>The genome sequence of Bacillus cereus ATCC 10987 reveals metabolic adaptations and a large plasmid related to Bacillus anthracis pXO1.</title>
        <authorList>
            <person name="Rasko D.A."/>
            <person name="Ravel J."/>
            <person name="Oekstad O.A."/>
            <person name="Helgason E."/>
            <person name="Cer R.Z."/>
            <person name="Jiang L."/>
            <person name="Shores K.A."/>
            <person name="Fouts D.E."/>
            <person name="Tourasse N.J."/>
            <person name="Angiuoli S.V."/>
            <person name="Kolonay J.F."/>
            <person name="Nelson W.C."/>
            <person name="Kolstoe A.-B."/>
            <person name="Fraser C.M."/>
            <person name="Read T.D."/>
        </authorList>
    </citation>
    <scope>NUCLEOTIDE SEQUENCE [LARGE SCALE GENOMIC DNA]</scope>
    <source>
        <strain>ATCC 10987 / NRS 248</strain>
    </source>
</reference>
<feature type="chain" id="PRO_0000126143" description="Large ribosomal subunit protein bL36">
    <location>
        <begin position="1"/>
        <end position="37"/>
    </location>
</feature>
<keyword id="KW-0687">Ribonucleoprotein</keyword>
<keyword id="KW-0689">Ribosomal protein</keyword>
<name>RL36_BACC1</name>
<dbReference type="EMBL" id="AE017194">
    <property type="protein sequence ID" value="AAS39070.1"/>
    <property type="molecule type" value="Genomic_DNA"/>
</dbReference>
<dbReference type="SMR" id="Q73F72"/>
<dbReference type="KEGG" id="bca:BCE_0134"/>
<dbReference type="HOGENOM" id="CLU_135723_6_2_9"/>
<dbReference type="Proteomes" id="UP000002527">
    <property type="component" value="Chromosome"/>
</dbReference>
<dbReference type="GO" id="GO:0005737">
    <property type="term" value="C:cytoplasm"/>
    <property type="evidence" value="ECO:0007669"/>
    <property type="project" value="UniProtKB-ARBA"/>
</dbReference>
<dbReference type="GO" id="GO:1990904">
    <property type="term" value="C:ribonucleoprotein complex"/>
    <property type="evidence" value="ECO:0007669"/>
    <property type="project" value="UniProtKB-KW"/>
</dbReference>
<dbReference type="GO" id="GO:0005840">
    <property type="term" value="C:ribosome"/>
    <property type="evidence" value="ECO:0007669"/>
    <property type="project" value="UniProtKB-KW"/>
</dbReference>
<dbReference type="GO" id="GO:0003735">
    <property type="term" value="F:structural constituent of ribosome"/>
    <property type="evidence" value="ECO:0007669"/>
    <property type="project" value="InterPro"/>
</dbReference>
<dbReference type="GO" id="GO:0006412">
    <property type="term" value="P:translation"/>
    <property type="evidence" value="ECO:0007669"/>
    <property type="project" value="UniProtKB-UniRule"/>
</dbReference>
<dbReference type="HAMAP" id="MF_00251">
    <property type="entry name" value="Ribosomal_bL36"/>
    <property type="match status" value="1"/>
</dbReference>
<dbReference type="InterPro" id="IPR000473">
    <property type="entry name" value="Ribosomal_bL36"/>
</dbReference>
<dbReference type="InterPro" id="IPR035977">
    <property type="entry name" value="Ribosomal_bL36_sp"/>
</dbReference>
<dbReference type="NCBIfam" id="TIGR01022">
    <property type="entry name" value="rpmJ_bact"/>
    <property type="match status" value="1"/>
</dbReference>
<dbReference type="PANTHER" id="PTHR42888">
    <property type="entry name" value="50S RIBOSOMAL PROTEIN L36, CHLOROPLASTIC"/>
    <property type="match status" value="1"/>
</dbReference>
<dbReference type="PANTHER" id="PTHR42888:SF1">
    <property type="entry name" value="LARGE RIBOSOMAL SUBUNIT PROTEIN BL36C"/>
    <property type="match status" value="1"/>
</dbReference>
<dbReference type="Pfam" id="PF00444">
    <property type="entry name" value="Ribosomal_L36"/>
    <property type="match status" value="1"/>
</dbReference>
<dbReference type="SUPFAM" id="SSF57840">
    <property type="entry name" value="Ribosomal protein L36"/>
    <property type="match status" value="1"/>
</dbReference>
<dbReference type="PROSITE" id="PS00828">
    <property type="entry name" value="RIBOSOMAL_L36"/>
    <property type="match status" value="1"/>
</dbReference>
<gene>
    <name evidence="1" type="primary">rpmJ</name>
    <name type="ordered locus">BCE_0134</name>
</gene>
<evidence type="ECO:0000255" key="1">
    <source>
        <dbReference type="HAMAP-Rule" id="MF_00251"/>
    </source>
</evidence>
<evidence type="ECO:0000305" key="2"/>
<proteinExistence type="inferred from homology"/>
<organism>
    <name type="scientific">Bacillus cereus (strain ATCC 10987 / NRS 248)</name>
    <dbReference type="NCBI Taxonomy" id="222523"/>
    <lineage>
        <taxon>Bacteria</taxon>
        <taxon>Bacillati</taxon>
        <taxon>Bacillota</taxon>
        <taxon>Bacilli</taxon>
        <taxon>Bacillales</taxon>
        <taxon>Bacillaceae</taxon>
        <taxon>Bacillus</taxon>
        <taxon>Bacillus cereus group</taxon>
    </lineage>
</organism>